<keyword id="KW-0903">Direct protein sequencing</keyword>
<keyword id="KW-1015">Disulfide bond</keyword>
<keyword id="KW-0960">Knottin</keyword>
<keyword id="KW-0611">Plant defense</keyword>
<comment type="function">
    <text>Probably participates in a plant defense mechanism.</text>
</comment>
<comment type="domain">
    <text>The presence of a 'disulfide through disulfide knot' structurally defines this protein as a knottin.</text>
</comment>
<comment type="PTM">
    <text>This is a cyclic peptide.</text>
</comment>
<comment type="mass spectrometry"/>
<comment type="similarity">
    <text evidence="1">Belongs to the cyclotide family. Bracelet subfamily.</text>
</comment>
<comment type="caution">
    <text evidence="3">This peptide is cyclic. The start position was chosen by similarity to OAK1 (kalata-B1) for which the DNA sequence is known.</text>
</comment>
<feature type="peptide" id="PRO_0000043622" description="Cyclotide hypa-A">
    <location>
        <begin position="1"/>
        <end position="30"/>
    </location>
</feature>
<feature type="disulfide bond">
    <location>
        <begin position="4"/>
        <end position="21"/>
    </location>
</feature>
<feature type="disulfide bond">
    <location>
        <begin position="8"/>
        <end position="23"/>
    </location>
</feature>
<feature type="disulfide bond">
    <location>
        <begin position="13"/>
        <end position="28"/>
    </location>
</feature>
<feature type="cross-link" description="Cyclopeptide (Gly-Asn)">
    <location>
        <begin position="1"/>
        <end position="30"/>
    </location>
</feature>
<name>HYPAA_POMPR</name>
<organism>
    <name type="scientific">Pombalia parviflora</name>
    <name type="common">Violetilla</name>
    <name type="synonym">Hybanthus parviflorus</name>
    <dbReference type="NCBI Taxonomy" id="179672"/>
    <lineage>
        <taxon>Eukaryota</taxon>
        <taxon>Viridiplantae</taxon>
        <taxon>Streptophyta</taxon>
        <taxon>Embryophyta</taxon>
        <taxon>Tracheophyta</taxon>
        <taxon>Spermatophyta</taxon>
        <taxon>Magnoliopsida</taxon>
        <taxon>eudicotyledons</taxon>
        <taxon>Gunneridae</taxon>
        <taxon>Pentapetalae</taxon>
        <taxon>rosids</taxon>
        <taxon>fabids</taxon>
        <taxon>Malpighiales</taxon>
        <taxon>Violaceae</taxon>
        <taxon>Pombalia</taxon>
    </lineage>
</organism>
<reference key="1">
    <citation type="journal article" date="2001" name="Phytochemistry">
        <title>First cyclotide from Hybanthus (Violaceae).</title>
        <authorList>
            <person name="Broussalis A.M."/>
            <person name="Goeransson U."/>
            <person name="Coussio J.D."/>
            <person name="Ferraro G."/>
            <person name="Martino V."/>
            <person name="Claeson P."/>
        </authorList>
    </citation>
    <scope>PROTEIN SEQUENCE</scope>
    <scope>MASS SPECTROMETRY</scope>
</reference>
<dbReference type="SMR" id="P58445"/>
<dbReference type="GO" id="GO:0006952">
    <property type="term" value="P:defense response"/>
    <property type="evidence" value="ECO:0007669"/>
    <property type="project" value="UniProtKB-KW"/>
</dbReference>
<dbReference type="InterPro" id="IPR005535">
    <property type="entry name" value="Cyclotide"/>
</dbReference>
<dbReference type="InterPro" id="IPR012323">
    <property type="entry name" value="Cyclotide_bracelet_CS"/>
</dbReference>
<dbReference type="InterPro" id="IPR036146">
    <property type="entry name" value="Cyclotide_sf"/>
</dbReference>
<dbReference type="Pfam" id="PF03784">
    <property type="entry name" value="Cyclotide"/>
    <property type="match status" value="1"/>
</dbReference>
<dbReference type="PIRSF" id="PIRSF037891">
    <property type="entry name" value="Cycloviolacin"/>
    <property type="match status" value="1"/>
</dbReference>
<dbReference type="SUPFAM" id="SSF57038">
    <property type="entry name" value="Cyclotides"/>
    <property type="match status" value="1"/>
</dbReference>
<dbReference type="PROSITE" id="PS51052">
    <property type="entry name" value="CYCLOTIDE"/>
    <property type="match status" value="1"/>
</dbReference>
<dbReference type="PROSITE" id="PS60008">
    <property type="entry name" value="CYCLOTIDE_BRACELET"/>
    <property type="match status" value="1"/>
</dbReference>
<proteinExistence type="evidence at protein level"/>
<evidence type="ECO:0000255" key="1">
    <source>
        <dbReference type="PROSITE-ProRule" id="PRU00395"/>
    </source>
</evidence>
<evidence type="ECO:0000269" key="2">
    <source>
    </source>
</evidence>
<evidence type="ECO:0000305" key="3"/>
<sequence>GIPCAESCVYIPCTITALLGCSCKNKVCYN</sequence>
<protein>
    <recommendedName>
        <fullName>Cyclotide hypa-A</fullName>
    </recommendedName>
</protein>
<accession>P58445</accession>